<comment type="function">
    <text evidence="3">Component of the ubiquinol-cytochrome c reductase complex (complex III or cytochrome b-c1 complex) that is part of the mitochondrial respiratory chain. The b-c1 complex mediates electron transfer from ubiquinol to cytochrome c. Contributes to the generation of a proton gradient across the mitochondrial membrane that is then used for ATP synthesis.</text>
</comment>
<comment type="cofactor">
    <cofactor evidence="3">
        <name>heme b</name>
        <dbReference type="ChEBI" id="CHEBI:60344"/>
    </cofactor>
    <text evidence="3">Binds 2 heme b groups non-covalently.</text>
</comment>
<comment type="subunit">
    <text evidence="1">The main subunits of complex b-c1 are: cytochrome b, cytochrome c1 and the Rieske protein.</text>
</comment>
<comment type="subcellular location">
    <subcellularLocation>
        <location evidence="3">Mitochondrion inner membrane</location>
        <topology evidence="3">Multi-pass membrane protein</topology>
    </subcellularLocation>
</comment>
<comment type="similarity">
    <text evidence="5 6">Belongs to the cytochrome b family.</text>
</comment>
<comment type="caution">
    <text evidence="3">The protein contains an even number of transmembrane helices, fewer than predicted by bioinformatics tools.</text>
</comment>
<organism>
    <name type="scientific">Paraspadella gotoi</name>
    <name type="common">Arrow worm</name>
    <dbReference type="NCBI Taxonomy" id="34758"/>
    <lineage>
        <taxon>Eukaryota</taxon>
        <taxon>Metazoa</taxon>
        <taxon>Spiralia</taxon>
        <taxon>Gnathifera</taxon>
        <taxon>Chaetognatha</taxon>
        <taxon>Sagittoidea</taxon>
        <taxon>Phragmophora</taxon>
        <taxon>Spadellidae</taxon>
        <taxon>Paraspadella</taxon>
    </lineage>
</organism>
<geneLocation type="mitochondrion"/>
<feature type="chain" id="PRO_0000357464" description="Cytochrome b">
    <location>
        <begin position="1"/>
        <end position="378"/>
    </location>
</feature>
<feature type="transmembrane region" description="Helical" evidence="3">
    <location>
        <begin position="35"/>
        <end position="55"/>
    </location>
</feature>
<feature type="transmembrane region" description="Helical" evidence="3">
    <location>
        <begin position="79"/>
        <end position="101"/>
    </location>
</feature>
<feature type="transmembrane region" description="Helical" evidence="3">
    <location>
        <begin position="114"/>
        <end position="134"/>
    </location>
</feature>
<feature type="transmembrane region" description="Helical" evidence="3">
    <location>
        <begin position="180"/>
        <end position="200"/>
    </location>
</feature>
<feature type="transmembrane region" description="Helical" evidence="3">
    <location>
        <begin position="226"/>
        <end position="246"/>
    </location>
</feature>
<feature type="transmembrane region" description="Helical" evidence="4">
    <location>
        <begin position="290"/>
        <end position="310"/>
    </location>
</feature>
<feature type="transmembrane region" description="Helical" evidence="4">
    <location>
        <begin position="326"/>
        <end position="346"/>
    </location>
</feature>
<feature type="transmembrane region" description="Helical" evidence="4">
    <location>
        <begin position="350"/>
        <end position="370"/>
    </location>
</feature>
<feature type="binding site" description="axial binding residue" evidence="3">
    <location>
        <position position="85"/>
    </location>
    <ligand>
        <name>heme b</name>
        <dbReference type="ChEBI" id="CHEBI:60344"/>
        <label>b562</label>
    </ligand>
    <ligandPart>
        <name>Fe</name>
        <dbReference type="ChEBI" id="CHEBI:18248"/>
    </ligandPart>
</feature>
<feature type="binding site" description="axial binding residue" evidence="3">
    <location>
        <position position="99"/>
    </location>
    <ligand>
        <name>heme b</name>
        <dbReference type="ChEBI" id="CHEBI:60344"/>
        <label>b566</label>
    </ligand>
    <ligandPart>
        <name>Fe</name>
        <dbReference type="ChEBI" id="CHEBI:18248"/>
    </ligandPart>
</feature>
<feature type="binding site" description="axial binding residue" evidence="3">
    <location>
        <position position="184"/>
    </location>
    <ligand>
        <name>heme b</name>
        <dbReference type="ChEBI" id="CHEBI:60344"/>
        <label>b562</label>
    </ligand>
    <ligandPart>
        <name>Fe</name>
        <dbReference type="ChEBI" id="CHEBI:18248"/>
    </ligandPart>
</feature>
<feature type="binding site" description="axial binding residue" evidence="3">
    <location>
        <position position="198"/>
    </location>
    <ligand>
        <name>heme b</name>
        <dbReference type="ChEBI" id="CHEBI:60344"/>
        <label>b566</label>
    </ligand>
    <ligandPart>
        <name>Fe</name>
        <dbReference type="ChEBI" id="CHEBI:18248"/>
    </ligandPart>
</feature>
<feature type="binding site" evidence="2">
    <location>
        <position position="203"/>
    </location>
    <ligand>
        <name>a ubiquinone</name>
        <dbReference type="ChEBI" id="CHEBI:16389"/>
    </ligand>
</feature>
<sequence>MMKERMRFKSNLFKIVNGVLIDLPSPRNFTFWWNFGSLLGLVLSIQLVTGIFLAMHYSCDSLLSFESVCHILRDVNEGWIIRLVHANGASFFFICLYCHIGRGMYFGSYMQTKTWIMGVLLFILVMAAAFLGYVLPWGQMSFWGATVITNLFSAIPYIGGDLVYWMWGGFSVGNSTLTRFFSLHFLVPFLVSLGAMLHIFFLHTTGSNNPLGVVADSDKIPFHIYYSAKDLLGFFFMFFFIIFISFLYPNLLGEPDNFIPANPLLTPHHIVPEWYFLFAYAILRSIPNKLGGVLGLLCALLVLFSLPLTHSNFFKSNALYIISRYFFWLFIVSFLMLTIGGGQPVCEPYVMCSQVWSCLYFTYFILCGPLRIFQDYYL</sequence>
<accession>Q6E0V4</accession>
<protein>
    <recommendedName>
        <fullName>Cytochrome b</fullName>
    </recommendedName>
    <alternativeName>
        <fullName>Complex III subunit 3</fullName>
    </alternativeName>
    <alternativeName>
        <fullName>Complex III subunit III</fullName>
    </alternativeName>
    <alternativeName>
        <fullName>Cytochrome b-c1 complex subunit 3</fullName>
    </alternativeName>
    <alternativeName>
        <fullName>Ubiquinol-cytochrome-c reductase complex cytochrome b subunit</fullName>
    </alternativeName>
</protein>
<evidence type="ECO:0000250" key="1"/>
<evidence type="ECO:0000250" key="2">
    <source>
        <dbReference type="UniProtKB" id="P00157"/>
    </source>
</evidence>
<evidence type="ECO:0000250" key="3">
    <source>
        <dbReference type="UniProtKB" id="P00163"/>
    </source>
</evidence>
<evidence type="ECO:0000255" key="4"/>
<evidence type="ECO:0000255" key="5">
    <source>
        <dbReference type="PROSITE-ProRule" id="PRU00967"/>
    </source>
</evidence>
<evidence type="ECO:0000255" key="6">
    <source>
        <dbReference type="PROSITE-ProRule" id="PRU00968"/>
    </source>
</evidence>
<gene>
    <name type="primary">mt:Cyt-b</name>
    <name type="synonym">Cob</name>
    <name type="synonym">cytb</name>
</gene>
<name>CYB_PARGO</name>
<proteinExistence type="inferred from homology"/>
<dbReference type="EMBL" id="AY619710">
    <property type="protein sequence ID" value="AAT12177.1"/>
    <property type="molecule type" value="Genomic_DNA"/>
</dbReference>
<dbReference type="RefSeq" id="YP_054605.1">
    <property type="nucleotide sequence ID" value="NC_006083.1"/>
</dbReference>
<dbReference type="SMR" id="Q6E0V4"/>
<dbReference type="GeneID" id="2914095"/>
<dbReference type="CTD" id="4519"/>
<dbReference type="GO" id="GO:0005743">
    <property type="term" value="C:mitochondrial inner membrane"/>
    <property type="evidence" value="ECO:0007669"/>
    <property type="project" value="UniProtKB-SubCell"/>
</dbReference>
<dbReference type="GO" id="GO:0045275">
    <property type="term" value="C:respiratory chain complex III"/>
    <property type="evidence" value="ECO:0007669"/>
    <property type="project" value="InterPro"/>
</dbReference>
<dbReference type="GO" id="GO:0046872">
    <property type="term" value="F:metal ion binding"/>
    <property type="evidence" value="ECO:0007669"/>
    <property type="project" value="UniProtKB-KW"/>
</dbReference>
<dbReference type="GO" id="GO:0008121">
    <property type="term" value="F:ubiquinol-cytochrome-c reductase activity"/>
    <property type="evidence" value="ECO:0007669"/>
    <property type="project" value="InterPro"/>
</dbReference>
<dbReference type="GO" id="GO:0006122">
    <property type="term" value="P:mitochondrial electron transport, ubiquinol to cytochrome c"/>
    <property type="evidence" value="ECO:0007669"/>
    <property type="project" value="TreeGrafter"/>
</dbReference>
<dbReference type="CDD" id="cd00290">
    <property type="entry name" value="cytochrome_b_C"/>
    <property type="match status" value="1"/>
</dbReference>
<dbReference type="CDD" id="cd00284">
    <property type="entry name" value="Cytochrome_b_N"/>
    <property type="match status" value="1"/>
</dbReference>
<dbReference type="Gene3D" id="1.20.810.10">
    <property type="entry name" value="Cytochrome Bc1 Complex, Chain C"/>
    <property type="match status" value="1"/>
</dbReference>
<dbReference type="InterPro" id="IPR005798">
    <property type="entry name" value="Cyt_b/b6_C"/>
</dbReference>
<dbReference type="InterPro" id="IPR036150">
    <property type="entry name" value="Cyt_b/b6_C_sf"/>
</dbReference>
<dbReference type="InterPro" id="IPR005797">
    <property type="entry name" value="Cyt_b/b6_N"/>
</dbReference>
<dbReference type="InterPro" id="IPR027387">
    <property type="entry name" value="Cytb/b6-like_sf"/>
</dbReference>
<dbReference type="InterPro" id="IPR030689">
    <property type="entry name" value="Cytochrome_b"/>
</dbReference>
<dbReference type="InterPro" id="IPR048260">
    <property type="entry name" value="Cytochrome_b_C_euk/bac"/>
</dbReference>
<dbReference type="InterPro" id="IPR048259">
    <property type="entry name" value="Cytochrome_b_N_euk/bac"/>
</dbReference>
<dbReference type="InterPro" id="IPR016174">
    <property type="entry name" value="Di-haem_cyt_TM"/>
</dbReference>
<dbReference type="PANTHER" id="PTHR19271">
    <property type="entry name" value="CYTOCHROME B"/>
    <property type="match status" value="1"/>
</dbReference>
<dbReference type="PANTHER" id="PTHR19271:SF16">
    <property type="entry name" value="CYTOCHROME B"/>
    <property type="match status" value="1"/>
</dbReference>
<dbReference type="Pfam" id="PF00032">
    <property type="entry name" value="Cytochrom_B_C"/>
    <property type="match status" value="1"/>
</dbReference>
<dbReference type="Pfam" id="PF00033">
    <property type="entry name" value="Cytochrome_B"/>
    <property type="match status" value="1"/>
</dbReference>
<dbReference type="PIRSF" id="PIRSF038885">
    <property type="entry name" value="COB"/>
    <property type="match status" value="1"/>
</dbReference>
<dbReference type="SUPFAM" id="SSF81648">
    <property type="entry name" value="a domain/subunit of cytochrome bc1 complex (Ubiquinol-cytochrome c reductase)"/>
    <property type="match status" value="1"/>
</dbReference>
<dbReference type="SUPFAM" id="SSF81342">
    <property type="entry name" value="Transmembrane di-heme cytochromes"/>
    <property type="match status" value="1"/>
</dbReference>
<dbReference type="PROSITE" id="PS51003">
    <property type="entry name" value="CYTB_CTER"/>
    <property type="match status" value="1"/>
</dbReference>
<dbReference type="PROSITE" id="PS51002">
    <property type="entry name" value="CYTB_NTER"/>
    <property type="match status" value="1"/>
</dbReference>
<keyword id="KW-0249">Electron transport</keyword>
<keyword id="KW-0349">Heme</keyword>
<keyword id="KW-0408">Iron</keyword>
<keyword id="KW-0472">Membrane</keyword>
<keyword id="KW-0479">Metal-binding</keyword>
<keyword id="KW-0496">Mitochondrion</keyword>
<keyword id="KW-0999">Mitochondrion inner membrane</keyword>
<keyword id="KW-0679">Respiratory chain</keyword>
<keyword id="KW-0812">Transmembrane</keyword>
<keyword id="KW-1133">Transmembrane helix</keyword>
<keyword id="KW-0813">Transport</keyword>
<keyword id="KW-0830">Ubiquinone</keyword>
<reference key="1">
    <citation type="journal article" date="2004" name="Proc. Natl. Acad. Sci. U.S.A.">
        <title>The mitochondrial genome of Paraspadella gotoi is highly reduced and reveals that chaetognaths are a sister group to protostomes.</title>
        <authorList>
            <person name="Helfenbein K.G."/>
            <person name="Fourcade H.M."/>
            <person name="Vanjani R.G."/>
            <person name="Boore J.L."/>
        </authorList>
    </citation>
    <scope>NUCLEOTIDE SEQUENCE [GENOMIC DNA]</scope>
</reference>